<protein>
    <recommendedName>
        <fullName evidence="1">Aspartate/glutamate leucyltransferase</fullName>
        <ecNumber evidence="1">2.3.2.29</ecNumber>
    </recommendedName>
</protein>
<comment type="function">
    <text evidence="1">Functions in the N-end rule pathway of protein degradation where it conjugates Leu from its aminoacyl-tRNA to the N-termini of proteins containing an N-terminal aspartate or glutamate.</text>
</comment>
<comment type="catalytic activity">
    <reaction evidence="1">
        <text>N-terminal L-glutamyl-[protein] + L-leucyl-tRNA(Leu) = N-terminal L-leucyl-L-glutamyl-[protein] + tRNA(Leu) + H(+)</text>
        <dbReference type="Rhea" id="RHEA:50412"/>
        <dbReference type="Rhea" id="RHEA-COMP:9613"/>
        <dbReference type="Rhea" id="RHEA-COMP:9622"/>
        <dbReference type="Rhea" id="RHEA-COMP:12664"/>
        <dbReference type="Rhea" id="RHEA-COMP:12668"/>
        <dbReference type="ChEBI" id="CHEBI:15378"/>
        <dbReference type="ChEBI" id="CHEBI:64721"/>
        <dbReference type="ChEBI" id="CHEBI:78442"/>
        <dbReference type="ChEBI" id="CHEBI:78494"/>
        <dbReference type="ChEBI" id="CHEBI:133041"/>
        <dbReference type="EC" id="2.3.2.29"/>
    </reaction>
</comment>
<comment type="catalytic activity">
    <reaction evidence="1">
        <text>N-terminal L-aspartyl-[protein] + L-leucyl-tRNA(Leu) = N-terminal L-leucyl-L-aspartyl-[protein] + tRNA(Leu) + H(+)</text>
        <dbReference type="Rhea" id="RHEA:50420"/>
        <dbReference type="Rhea" id="RHEA-COMP:9613"/>
        <dbReference type="Rhea" id="RHEA-COMP:9622"/>
        <dbReference type="Rhea" id="RHEA-COMP:12669"/>
        <dbReference type="Rhea" id="RHEA-COMP:12674"/>
        <dbReference type="ChEBI" id="CHEBI:15378"/>
        <dbReference type="ChEBI" id="CHEBI:64720"/>
        <dbReference type="ChEBI" id="CHEBI:78442"/>
        <dbReference type="ChEBI" id="CHEBI:78494"/>
        <dbReference type="ChEBI" id="CHEBI:133042"/>
        <dbReference type="EC" id="2.3.2.29"/>
    </reaction>
</comment>
<comment type="subcellular location">
    <subcellularLocation>
        <location evidence="1">Cytoplasm</location>
    </subcellularLocation>
</comment>
<comment type="similarity">
    <text evidence="1">Belongs to the R-transferase family. Bpt subfamily.</text>
</comment>
<accession>Q04SK8</accession>
<feature type="chain" id="PRO_1000131981" description="Aspartate/glutamate leucyltransferase">
    <location>
        <begin position="1"/>
        <end position="255"/>
    </location>
</feature>
<name>BPT_LEPBJ</name>
<organism>
    <name type="scientific">Leptospira borgpetersenii serovar Hardjo-bovis (strain JB197)</name>
    <dbReference type="NCBI Taxonomy" id="355277"/>
    <lineage>
        <taxon>Bacteria</taxon>
        <taxon>Pseudomonadati</taxon>
        <taxon>Spirochaetota</taxon>
        <taxon>Spirochaetia</taxon>
        <taxon>Leptospirales</taxon>
        <taxon>Leptospiraceae</taxon>
        <taxon>Leptospira</taxon>
    </lineage>
</organism>
<evidence type="ECO:0000255" key="1">
    <source>
        <dbReference type="HAMAP-Rule" id="MF_00689"/>
    </source>
</evidence>
<dbReference type="EC" id="2.3.2.29" evidence="1"/>
<dbReference type="EMBL" id="CP000350">
    <property type="protein sequence ID" value="ABJ76112.1"/>
    <property type="molecule type" value="Genomic_DNA"/>
</dbReference>
<dbReference type="RefSeq" id="WP_011670327.1">
    <property type="nucleotide sequence ID" value="NC_008510.1"/>
</dbReference>
<dbReference type="SMR" id="Q04SK8"/>
<dbReference type="KEGG" id="lbj:LBJ_1540"/>
<dbReference type="HOGENOM" id="CLU_077607_0_0_12"/>
<dbReference type="Proteomes" id="UP000000656">
    <property type="component" value="Chromosome 1"/>
</dbReference>
<dbReference type="GO" id="GO:0005737">
    <property type="term" value="C:cytoplasm"/>
    <property type="evidence" value="ECO:0007669"/>
    <property type="project" value="UniProtKB-SubCell"/>
</dbReference>
<dbReference type="GO" id="GO:0004057">
    <property type="term" value="F:arginyl-tRNA--protein transferase activity"/>
    <property type="evidence" value="ECO:0007669"/>
    <property type="project" value="InterPro"/>
</dbReference>
<dbReference type="GO" id="GO:0008914">
    <property type="term" value="F:leucyl-tRNA--protein transferase activity"/>
    <property type="evidence" value="ECO:0007669"/>
    <property type="project" value="UniProtKB-UniRule"/>
</dbReference>
<dbReference type="GO" id="GO:0071596">
    <property type="term" value="P:ubiquitin-dependent protein catabolic process via the N-end rule pathway"/>
    <property type="evidence" value="ECO:0007669"/>
    <property type="project" value="InterPro"/>
</dbReference>
<dbReference type="HAMAP" id="MF_00689">
    <property type="entry name" value="Bpt"/>
    <property type="match status" value="1"/>
</dbReference>
<dbReference type="InterPro" id="IPR016181">
    <property type="entry name" value="Acyl_CoA_acyltransferase"/>
</dbReference>
<dbReference type="InterPro" id="IPR017138">
    <property type="entry name" value="Asp_Glu_LeuTrfase"/>
</dbReference>
<dbReference type="InterPro" id="IPR030700">
    <property type="entry name" value="N-end_Aminoacyl_Trfase"/>
</dbReference>
<dbReference type="InterPro" id="IPR007472">
    <property type="entry name" value="N-end_Aminoacyl_Trfase_C"/>
</dbReference>
<dbReference type="InterPro" id="IPR007471">
    <property type="entry name" value="N-end_Aminoacyl_Trfase_N"/>
</dbReference>
<dbReference type="NCBIfam" id="NF002346">
    <property type="entry name" value="PRK01305.2-3"/>
    <property type="match status" value="1"/>
</dbReference>
<dbReference type="PANTHER" id="PTHR21367">
    <property type="entry name" value="ARGININE-TRNA-PROTEIN TRANSFERASE 1"/>
    <property type="match status" value="1"/>
</dbReference>
<dbReference type="PANTHER" id="PTHR21367:SF1">
    <property type="entry name" value="ARGINYL-TRNA--PROTEIN TRANSFERASE 1"/>
    <property type="match status" value="1"/>
</dbReference>
<dbReference type="Pfam" id="PF04377">
    <property type="entry name" value="ATE_C"/>
    <property type="match status" value="1"/>
</dbReference>
<dbReference type="Pfam" id="PF04376">
    <property type="entry name" value="ATE_N"/>
    <property type="match status" value="1"/>
</dbReference>
<dbReference type="PIRSF" id="PIRSF037208">
    <property type="entry name" value="ATE_pro_prd"/>
    <property type="match status" value="1"/>
</dbReference>
<dbReference type="SUPFAM" id="SSF55729">
    <property type="entry name" value="Acyl-CoA N-acyltransferases (Nat)"/>
    <property type="match status" value="1"/>
</dbReference>
<keyword id="KW-0012">Acyltransferase</keyword>
<keyword id="KW-0963">Cytoplasm</keyword>
<keyword id="KW-0808">Transferase</keyword>
<reference key="1">
    <citation type="journal article" date="2006" name="Proc. Natl. Acad. Sci. U.S.A.">
        <title>Genome reduction in Leptospira borgpetersenii reflects limited transmission potential.</title>
        <authorList>
            <person name="Bulach D.M."/>
            <person name="Zuerner R.L."/>
            <person name="Wilson P."/>
            <person name="Seemann T."/>
            <person name="McGrath A."/>
            <person name="Cullen P.A."/>
            <person name="Davis J."/>
            <person name="Johnson M."/>
            <person name="Kuczek E."/>
            <person name="Alt D.P."/>
            <person name="Peterson-Burch B."/>
            <person name="Coppel R.L."/>
            <person name="Rood J.I."/>
            <person name="Davies J.K."/>
            <person name="Adler B."/>
        </authorList>
    </citation>
    <scope>NUCLEOTIDE SEQUENCE [LARGE SCALE GENOMIC DNA]</scope>
    <source>
        <strain>JB197</strain>
    </source>
</reference>
<proteinExistence type="inferred from homology"/>
<gene>
    <name evidence="1" type="primary">bpt</name>
    <name type="ordered locus">LBJ_1540</name>
</gene>
<sequence length="255" mass="30216">MIRHKLQNFVNSLPISPERSCSYYPDRLSQIQYLPLQGKIEKDNLQFFFDSGFRRTGNILYRTSCNACRECLSYRVPLNQFVPSRNRKRLLKKNSDLVVRFGSPHLTVEKEILYLRYQRSRYQSFVIGESDQELLEGMRWNLFGYPENSLEMTLSLDEKILGFMILDSASDSLSAVYSVYDPDYPDRSLGSFAILYSILYAKELGMKYYHLGYFLPGHPDMDYKKHWVPSEIRELDTNDWIPFEEFQKKYADFSW</sequence>